<dbReference type="EMBL" id="AJ303372">
    <property type="protein sequence ID" value="CAC21555.1"/>
    <property type="molecule type" value="mRNA"/>
</dbReference>
<dbReference type="EMBL" id="AF315652">
    <property type="protein sequence ID" value="AAG30297.1"/>
    <property type="molecule type" value="mRNA"/>
</dbReference>
<dbReference type="EMBL" id="AJ428404">
    <property type="protein sequence ID" value="CAD21439.1"/>
    <property type="molecule type" value="Genomic_DNA"/>
</dbReference>
<dbReference type="RefSeq" id="NP_110467.1">
    <property type="nucleotide sequence ID" value="NM_030840.1"/>
</dbReference>
<dbReference type="RefSeq" id="XP_017448406.1">
    <property type="nucleotide sequence ID" value="XM_017592917.1"/>
</dbReference>
<dbReference type="PDB" id="3LLO">
    <property type="method" value="X-ray"/>
    <property type="resolution" value="1.57 A"/>
    <property type="chains" value="A=505-563, A=637-718"/>
</dbReference>
<dbReference type="PDB" id="5EUS">
    <property type="method" value="X-ray"/>
    <property type="resolution" value="1.83 A"/>
    <property type="chains" value="A=505-563, A=637-718"/>
</dbReference>
<dbReference type="PDB" id="5EUU">
    <property type="method" value="X-ray"/>
    <property type="resolution" value="1.87 A"/>
    <property type="chains" value="A=505-563, A=637-718"/>
</dbReference>
<dbReference type="PDB" id="5EUW">
    <property type="method" value="X-ray"/>
    <property type="resolution" value="1.81 A"/>
    <property type="chains" value="A=505-563, A=637-718"/>
</dbReference>
<dbReference type="PDB" id="5EUX">
    <property type="method" value="X-ray"/>
    <property type="resolution" value="2.04 A"/>
    <property type="chains" value="A=505-563, A=637-718"/>
</dbReference>
<dbReference type="PDB" id="5EUZ">
    <property type="method" value="X-ray"/>
    <property type="resolution" value="2.40 A"/>
    <property type="chains" value="A=505-563, A=637-718"/>
</dbReference>
<dbReference type="PDBsum" id="3LLO"/>
<dbReference type="PDBsum" id="5EUS"/>
<dbReference type="PDBsum" id="5EUU"/>
<dbReference type="PDBsum" id="5EUW"/>
<dbReference type="PDBsum" id="5EUX"/>
<dbReference type="PDBsum" id="5EUZ"/>
<dbReference type="SMR" id="Q9EPH0"/>
<dbReference type="FunCoup" id="Q9EPH0">
    <property type="interactions" value="399"/>
</dbReference>
<dbReference type="STRING" id="10116.ENSRNOP00000015733"/>
<dbReference type="GlyCosmos" id="Q9EPH0">
    <property type="glycosylation" value="2 sites, No reported glycans"/>
</dbReference>
<dbReference type="GlyGen" id="Q9EPH0">
    <property type="glycosylation" value="2 sites"/>
</dbReference>
<dbReference type="iPTMnet" id="Q9EPH0"/>
<dbReference type="PhosphoSitePlus" id="Q9EPH0"/>
<dbReference type="PaxDb" id="10116-ENSRNOP00000015733"/>
<dbReference type="Ensembl" id="ENSRNOT00000015733.3">
    <property type="protein sequence ID" value="ENSRNOP00000015733.2"/>
    <property type="gene ID" value="ENSRNOG00000011616.5"/>
</dbReference>
<dbReference type="GeneID" id="83819"/>
<dbReference type="KEGG" id="rno:83819"/>
<dbReference type="AGR" id="RGD:69334"/>
<dbReference type="CTD" id="375611"/>
<dbReference type="RGD" id="69334">
    <property type="gene designation" value="Slc26a5"/>
</dbReference>
<dbReference type="eggNOG" id="KOG0236">
    <property type="taxonomic scope" value="Eukaryota"/>
</dbReference>
<dbReference type="GeneTree" id="ENSGT01070000253775"/>
<dbReference type="HOGENOM" id="CLU_003182_9_4_1"/>
<dbReference type="InParanoid" id="Q9EPH0"/>
<dbReference type="OMA" id="YKDAQRV"/>
<dbReference type="OrthoDB" id="288203at2759"/>
<dbReference type="PhylomeDB" id="Q9EPH0"/>
<dbReference type="TreeFam" id="TF313784"/>
<dbReference type="EvolutionaryTrace" id="Q9EPH0"/>
<dbReference type="PRO" id="PR:Q9EPH0"/>
<dbReference type="Proteomes" id="UP000002494">
    <property type="component" value="Chromosome 4"/>
</dbReference>
<dbReference type="Bgee" id="ENSRNOG00000011616">
    <property type="expression patterns" value="Expressed in testis"/>
</dbReference>
<dbReference type="GO" id="GO:0016323">
    <property type="term" value="C:basolateral plasma membrane"/>
    <property type="evidence" value="ECO:0000314"/>
    <property type="project" value="RGD"/>
</dbReference>
<dbReference type="GO" id="GO:0016328">
    <property type="term" value="C:lateral plasma membrane"/>
    <property type="evidence" value="ECO:0000314"/>
    <property type="project" value="RGD"/>
</dbReference>
<dbReference type="GO" id="GO:0120249">
    <property type="term" value="C:lateral wall of outer hair cell"/>
    <property type="evidence" value="ECO:0000266"/>
    <property type="project" value="RGD"/>
</dbReference>
<dbReference type="GO" id="GO:0005886">
    <property type="term" value="C:plasma membrane"/>
    <property type="evidence" value="ECO:0000266"/>
    <property type="project" value="RGD"/>
</dbReference>
<dbReference type="GO" id="GO:0015106">
    <property type="term" value="F:bicarbonate transmembrane transporter activity"/>
    <property type="evidence" value="ECO:0000318"/>
    <property type="project" value="GO_Central"/>
</dbReference>
<dbReference type="GO" id="GO:0015108">
    <property type="term" value="F:chloride transmembrane transporter activity"/>
    <property type="evidence" value="ECO:0000318"/>
    <property type="project" value="GO_Central"/>
</dbReference>
<dbReference type="GO" id="GO:0140900">
    <property type="term" value="F:chloride:bicarbonate antiporter activity"/>
    <property type="evidence" value="ECO:0000314"/>
    <property type="project" value="UniProtKB"/>
</dbReference>
<dbReference type="GO" id="GO:0003774">
    <property type="term" value="F:cytoskeletal motor activity"/>
    <property type="evidence" value="ECO:0000304"/>
    <property type="project" value="RGD"/>
</dbReference>
<dbReference type="GO" id="GO:0042802">
    <property type="term" value="F:identical protein binding"/>
    <property type="evidence" value="ECO:0000353"/>
    <property type="project" value="RGD"/>
</dbReference>
<dbReference type="GO" id="GO:0019531">
    <property type="term" value="F:oxalate transmembrane transporter activity"/>
    <property type="evidence" value="ECO:0000318"/>
    <property type="project" value="GO_Central"/>
</dbReference>
<dbReference type="GO" id="GO:0042803">
    <property type="term" value="F:protein homodimerization activity"/>
    <property type="evidence" value="ECO:0000250"/>
    <property type="project" value="UniProtKB"/>
</dbReference>
<dbReference type="GO" id="GO:0008271">
    <property type="term" value="F:secondary active sulfate transmembrane transporter activity"/>
    <property type="evidence" value="ECO:0007669"/>
    <property type="project" value="InterPro"/>
</dbReference>
<dbReference type="GO" id="GO:0030507">
    <property type="term" value="F:spectrin binding"/>
    <property type="evidence" value="ECO:0000266"/>
    <property type="project" value="RGD"/>
</dbReference>
<dbReference type="GO" id="GO:0015116">
    <property type="term" value="F:sulfate transmembrane transporter activity"/>
    <property type="evidence" value="ECO:0000318"/>
    <property type="project" value="GO_Central"/>
</dbReference>
<dbReference type="GO" id="GO:0015701">
    <property type="term" value="P:bicarbonate transport"/>
    <property type="evidence" value="ECO:0000314"/>
    <property type="project" value="UniProtKB"/>
</dbReference>
<dbReference type="GO" id="GO:1902476">
    <property type="term" value="P:chloride transmembrane transport"/>
    <property type="evidence" value="ECO:0000315"/>
    <property type="project" value="RGD"/>
</dbReference>
<dbReference type="GO" id="GO:0006821">
    <property type="term" value="P:chloride transport"/>
    <property type="evidence" value="ECO:0000314"/>
    <property type="project" value="UniProtKB"/>
</dbReference>
<dbReference type="GO" id="GO:0090102">
    <property type="term" value="P:cochlea development"/>
    <property type="evidence" value="ECO:0000270"/>
    <property type="project" value="RGD"/>
</dbReference>
<dbReference type="GO" id="GO:0015755">
    <property type="term" value="P:fructose transmembrane transport"/>
    <property type="evidence" value="ECO:0000314"/>
    <property type="project" value="RGD"/>
</dbReference>
<dbReference type="GO" id="GO:0098656">
    <property type="term" value="P:monoatomic anion transmembrane transport"/>
    <property type="evidence" value="ECO:0000314"/>
    <property type="project" value="RGD"/>
</dbReference>
<dbReference type="GO" id="GO:0034220">
    <property type="term" value="P:monoatomic ion transmembrane transport"/>
    <property type="evidence" value="ECO:0000314"/>
    <property type="project" value="RGD"/>
</dbReference>
<dbReference type="GO" id="GO:0034766">
    <property type="term" value="P:negative regulation of monoatomic ion transmembrane transport"/>
    <property type="evidence" value="ECO:0000314"/>
    <property type="project" value="RGD"/>
</dbReference>
<dbReference type="GO" id="GO:0019532">
    <property type="term" value="P:oxalate transport"/>
    <property type="evidence" value="ECO:0000314"/>
    <property type="project" value="UniProtKB"/>
</dbReference>
<dbReference type="GO" id="GO:2000147">
    <property type="term" value="P:positive regulation of cell motility"/>
    <property type="evidence" value="ECO:0000314"/>
    <property type="project" value="RGD"/>
</dbReference>
<dbReference type="GO" id="GO:0045793">
    <property type="term" value="P:positive regulation of cell size"/>
    <property type="evidence" value="ECO:0000314"/>
    <property type="project" value="RGD"/>
</dbReference>
<dbReference type="GO" id="GO:0008360">
    <property type="term" value="P:regulation of cell shape"/>
    <property type="evidence" value="ECO:0007669"/>
    <property type="project" value="UniProtKB-KW"/>
</dbReference>
<dbReference type="GO" id="GO:0042391">
    <property type="term" value="P:regulation of membrane potential"/>
    <property type="evidence" value="ECO:0000266"/>
    <property type="project" value="RGD"/>
</dbReference>
<dbReference type="GO" id="GO:0010996">
    <property type="term" value="P:response to auditory stimulus"/>
    <property type="evidence" value="ECO:0000270"/>
    <property type="project" value="RGD"/>
</dbReference>
<dbReference type="GO" id="GO:0002931">
    <property type="term" value="P:response to ischemia"/>
    <property type="evidence" value="ECO:0000270"/>
    <property type="project" value="RGD"/>
</dbReference>
<dbReference type="GO" id="GO:0035864">
    <property type="term" value="P:response to potassium ion"/>
    <property type="evidence" value="ECO:0000270"/>
    <property type="project" value="RGD"/>
</dbReference>
<dbReference type="GO" id="GO:0009751">
    <property type="term" value="P:response to salicylic acid"/>
    <property type="evidence" value="ECO:0000270"/>
    <property type="project" value="RGD"/>
</dbReference>
<dbReference type="GO" id="GO:1902074">
    <property type="term" value="P:response to salt"/>
    <property type="evidence" value="ECO:0000270"/>
    <property type="project" value="RGD"/>
</dbReference>
<dbReference type="GO" id="GO:0097066">
    <property type="term" value="P:response to thyroid hormone"/>
    <property type="evidence" value="ECO:0000270"/>
    <property type="project" value="RGD"/>
</dbReference>
<dbReference type="GO" id="GO:0009410">
    <property type="term" value="P:response to xenobiotic stimulus"/>
    <property type="evidence" value="ECO:0000270"/>
    <property type="project" value="RGD"/>
</dbReference>
<dbReference type="GO" id="GO:0007605">
    <property type="term" value="P:sensory perception of sound"/>
    <property type="evidence" value="ECO:0000266"/>
    <property type="project" value="RGD"/>
</dbReference>
<dbReference type="GO" id="GO:1902358">
    <property type="term" value="P:sulfate transmembrane transport"/>
    <property type="evidence" value="ECO:0000318"/>
    <property type="project" value="GO_Central"/>
</dbReference>
<dbReference type="CDD" id="cd07043">
    <property type="entry name" value="STAS_anti-anti-sigma_factors"/>
    <property type="match status" value="1"/>
</dbReference>
<dbReference type="CDD" id="cd07042">
    <property type="entry name" value="STAS_SulP_like_sulfate_transporter"/>
    <property type="match status" value="1"/>
</dbReference>
<dbReference type="DisProt" id="DP01937"/>
<dbReference type="Gene3D" id="3.30.750.24">
    <property type="entry name" value="STAS domain"/>
    <property type="match status" value="1"/>
</dbReference>
<dbReference type="InterPro" id="IPR018045">
    <property type="entry name" value="S04_transporter_CS"/>
</dbReference>
<dbReference type="InterPro" id="IPR011547">
    <property type="entry name" value="SLC26A/SulP_dom"/>
</dbReference>
<dbReference type="InterPro" id="IPR001902">
    <property type="entry name" value="SLC26A/SulP_fam"/>
</dbReference>
<dbReference type="InterPro" id="IPR002645">
    <property type="entry name" value="STAS_dom"/>
</dbReference>
<dbReference type="InterPro" id="IPR036513">
    <property type="entry name" value="STAS_dom_sf"/>
</dbReference>
<dbReference type="NCBIfam" id="TIGR00815">
    <property type="entry name" value="sulP"/>
    <property type="match status" value="1"/>
</dbReference>
<dbReference type="PANTHER" id="PTHR11814">
    <property type="entry name" value="SULFATE TRANSPORTER"/>
    <property type="match status" value="1"/>
</dbReference>
<dbReference type="Pfam" id="PF01740">
    <property type="entry name" value="STAS"/>
    <property type="match status" value="1"/>
</dbReference>
<dbReference type="Pfam" id="PF00916">
    <property type="entry name" value="Sulfate_transp"/>
    <property type="match status" value="1"/>
</dbReference>
<dbReference type="SUPFAM" id="SSF52091">
    <property type="entry name" value="SpoIIaa-like"/>
    <property type="match status" value="1"/>
</dbReference>
<dbReference type="PROSITE" id="PS01130">
    <property type="entry name" value="SLC26A"/>
    <property type="match status" value="1"/>
</dbReference>
<dbReference type="PROSITE" id="PS50801">
    <property type="entry name" value="STAS"/>
    <property type="match status" value="1"/>
</dbReference>
<comment type="function">
    <text evidence="1 2 3 4 8 9 10 13 15 16 17">Voltage-sensitive motor protein that drives outer hair cell (OHC) electromotility (eM) and participates in sound amplification in the hearing organ (PubMed:11125015, PubMed:11274441). Converts changes in the transmembrane electric potential into mechanical displacements resulting in the coupling of its expansion to movement of a charged voltage sensor across the lipid membrane (PubMed:11125015, PubMed:11274441). The nature of the voltage sensor is not completely clear, and two models compete. In the first model, acts as an incomplete transporter where intracellular chloride anion acts as extrinsic voltage sensor that drives conformational change in the protein which is sufficient to produce a length change in the plane of the membrane and hence in the length of the OHC (PubMed:11423665). The second model in which multiple charged amino acid residues are distributed at the intracellular and extracellular membrane interfaces that form an intrinsic voltage sensor, whose movement produces the non-linear capacitance (NLC) (By similarity). However, the effective voltage sensor may be the result of a hybrid voltage sensor assembled from intrinsic charge (charged residues) and extrinsic charge (bound anion) (By similarity). Notably, binding of anions to the anion-binding pocket partially neutralizes the intrinsic positive charge rather than to form an electrically negative sensor, therefore remaining charge may serve as voltage sensor that, after depolarization, moves from down (expanded state) to up (contracted) conformation, which is accompanied by an eccentric contraction of the intermembrane cross-sectional area of the protein as well as a major increase in the hydrophobic thickness of the protein having as consequences the plasma membrane thickening and the cell contraction after membrane depolarization (By similarity). The anion-binding pocket transits from the inward-open (Down) state, where it is exposed toward the intracellular solvent in the absence of anion, to the occluded (Up) state upon anion binding (PubMed:24710176). Salicylate competes for the anion-binding site and inhibits the voltage-sensor movement, and therefore inhibits the charge transfer and electromotility by displacing Cl(-) from the anion-binding site and by preventing the structural transitions to the contracted state (By similarity). In addition, can act as a weak Cl(-)/HCO3(-) antiporter across the cell membrane and so regulate the intracellular pH of the outer hair cells (OHCs) (PubMed:22063625, PubMed:22890707), while firstly found as being unable to mediate electrogenic anion transport (PubMed:17442754, PubMed:22063625, PubMed:22890707). Moreover, supports a role in cardiac mechanical amplification serving as an elastic element to enhance the actomyosin- based sarcomere contraction system (By similarity).</text>
</comment>
<comment type="catalytic activity">
    <reaction evidence="16">
        <text>2 hydrogencarbonate(in) + chloride(out) = 2 hydrogencarbonate(out) + chloride(in)</text>
        <dbReference type="Rhea" id="RHEA:72207"/>
        <dbReference type="ChEBI" id="CHEBI:17544"/>
        <dbReference type="ChEBI" id="CHEBI:17996"/>
    </reaction>
</comment>
<comment type="activity regulation">
    <text evidence="10">Salicylate, an inhibitor of outer hair cell motility, acts as a competitive antagonist at the prestin anion-binding site.</text>
</comment>
<comment type="subunit">
    <text evidence="2 19">Homodimer (By similarity). Interacts (via STAS domain) with CALM; this interaction is calcium-dependent and the STAS domain interacts with only one lobe of CALM which is an elongated conformation (PubMed:33667636). Interacts with MYH1 (By similarity).</text>
</comment>
<comment type="subcellular location">
    <subcellularLocation>
        <location evidence="8 11 22">Lateral cell membrane</location>
        <topology evidence="17">Multi-pass membrane protein</topology>
    </subcellularLocation>
    <text evidence="2 8 11">Lateral membrane of outer hair cells (PubMed:11125015, PubMed:11867734). Alters profoundly the shape of its surrounding lipid bilayer (By similarity).</text>
</comment>
<comment type="tissue specificity">
    <text evidence="8 11 12">Specifically expressed in outer hair cells of cochleae (PubMed:11125015, PubMed:12782792) (at protein level) (PubMed:11867734). Not detected in other cells of the organ of Corti (PubMed:11125015).</text>
</comment>
<comment type="developmental stage">
    <text evidence="11">Expressed in the outer hair cells in the cochlea from day 7 onwards, including at day 12, at the onset of hearing in rats (at protein level) (PubMed:11867734). Low levels are present in newborn rats and up to day 6. Subsequently, levels increase strongly. Adult levels are detected starting from day 9 in the basal turn of the cochlea, from day 10-11 in the middle turn, and from day 12 in the apical turn.</text>
</comment>
<comment type="induction">
    <text evidence="11">Up-regulated in cochlea by thyroid hormone T3, perhaps acting via thyroid hormone receptor (at protein level).</text>
</comment>
<comment type="domain">
    <text evidence="1 2 4 17 18 19">The STAS domain mediates dimerization, with both STAS domains latched onto each other in a domain-swapped manner (By similarity). The N-terminus domain is involved in dimerization such that each N-terminus domain embraces both STAS domains (By similarity). The STAS domain harbors a unique anion-binding site important for the fine regulation of the high-frequency electromotile properties (PubMed:26635354). The transmembrane domain consists of 14 transmembrane segments organized a 7(+)7 inverted repeat architecture that can be divided into two main helix bundles, the ''core'' domain and the ''gate'' domain (PubMed:24710176). The transmembrane regions are domain-swapped with the STAS domain containing N- and C-terminal cytoplasmic domains (By similarity). The STAS domain mediates CALM binding CALM (PubMed:33667636).</text>
</comment>
<comment type="miscellaneous">
    <text evidence="17">The anion-binding site that controls electromotility and associated charge movement in mammalian corresponds to the central binding site of the anion translocation pathway in non-mammalian.</text>
</comment>
<comment type="similarity">
    <text evidence="21">Belongs to the SLC26A/SulP transporter (TC 2.A.53) family.</text>
</comment>
<comment type="online information" name="Protein Spotlight">
    <link uri="https://www.proteinspotlight.org/back_issues/022"/>
    <text>Pump up the volume - Issue 22 of May 2002</text>
</comment>
<reference key="1">
    <citation type="journal article" date="2001" name="Proc. Natl. Acad. Sci. U.S.A.">
        <title>Reciprocal electromechanical properties of rat prestin: the motor molecule from rat outer hair cells.</title>
        <authorList>
            <person name="Ludwig J."/>
            <person name="Oliver D."/>
            <person name="Frank G."/>
            <person name="Kloecker N."/>
            <person name="Gummer A.W."/>
            <person name="Fakler B."/>
        </authorList>
    </citation>
    <scope>NUCLEOTIDE SEQUENCE [MRNA]</scope>
    <scope>FUNCTION</scope>
    <scope>SUBCELLULAR LOCATION</scope>
    <scope>TOPOLOGY</scope>
    <source>
        <tissue>Cochlea</tissue>
    </source>
</reference>
<reference key="2">
    <citation type="submission" date="2000-10" db="EMBL/GenBank/DDBJ databases">
        <title>Dynamic developmental expression of cochlear hair cell genes: prestin and otoferlin.</title>
        <authorList>
            <person name="Beisel K.W."/>
            <person name="Nelson N.C."/>
            <person name="Beisel C.L."/>
            <person name="Delimont D.C."/>
            <person name="He D.Z.Z."/>
            <person name="Fritzsch B."/>
        </authorList>
    </citation>
    <scope>NUCLEOTIDE SEQUENCE [MRNA] OF 249-668</scope>
    <source>
        <strain>Sprague-Dawley</strain>
    </source>
</reference>
<reference key="3">
    <citation type="journal article" date="2002" name="Proc. Natl. Acad. Sci. U.S.A.">
        <title>Thyroid hormone is a critical determinant for the regulation of the cochlear motor protein prestin.</title>
        <authorList>
            <person name="Weber T."/>
            <person name="Zimmermann U."/>
            <person name="Winter H."/>
            <person name="Mack A."/>
            <person name="Koepschall I."/>
            <person name="Rohbock K."/>
            <person name="Zenner H.P."/>
            <person name="Knipper M."/>
        </authorList>
    </citation>
    <scope>NUCLEOTIDE SEQUENCE [GENOMIC DNA] OF 1-20</scope>
    <scope>SUBCELLULAR LOCATION</scope>
    <scope>TISSUE SPECIFICITY</scope>
    <scope>INDUCTION BY THYROID HORMONE</scope>
    <source>
        <strain>Sprague-Dawley</strain>
    </source>
</reference>
<reference key="4">
    <citation type="journal article" date="2000" name="J. Neurosci.">
        <title>Expression and localization of prestin and the sugar transporter GLUT-5 during development of electromotility in cochlear outer hair cells.</title>
        <authorList>
            <person name="Belyantseva I.A."/>
            <person name="Adler H.J."/>
            <person name="Curi R."/>
            <person name="Frolenkov G.I."/>
            <person name="Kachar B."/>
        </authorList>
    </citation>
    <scope>FUNCTION</scope>
    <scope>SUBCELLULAR LOCATION</scope>
    <scope>TISSUE SPECIFICITY</scope>
</reference>
<reference key="5">
    <citation type="journal article" date="2001" name="Science">
        <title>Intracellular anions as the voltage sensor of prestin, the outer hair cell motor protein.</title>
        <authorList>
            <person name="Oliver D."/>
            <person name="He D.Z.Z."/>
            <person name="Kloecker N."/>
            <person name="Ludwig J."/>
            <person name="Schulte U."/>
            <person name="Waldegger S."/>
            <person name="Ruppersberg J.P."/>
            <person name="Dallos P."/>
            <person name="Fakler B."/>
        </authorList>
    </citation>
    <scope>FUNCTION</scope>
    <scope>MUTAGENESIS OF ASP-154; ASP-155; GLU-169; LYS-177; ARG-197; LYS-233; LYS-235; ARG-236; GLU-277; ARG-281; LYS-283; LYS-285; ASP-332; ASP-342; LYS-409; LYS-557; ARG-558; LYS-559; ARG-571; ARG-572 AND LYS-577</scope>
</reference>
<reference key="6">
    <citation type="journal article" date="2003" name="Proc. Natl. Acad. Sci. U.S.A.">
        <title>Expression of prestin-homologous solute carrier (SLC26) in auditory organs of nonmammalian vertebrates and insects.</title>
        <authorList>
            <person name="Weber T."/>
            <person name="Gopfert M.C."/>
            <person name="Winter H."/>
            <person name="Zimmermann U."/>
            <person name="Kohler H."/>
            <person name="Meier A."/>
            <person name="Hendrich O."/>
            <person name="Rohbock K."/>
            <person name="Robert D."/>
            <person name="Knipper M."/>
        </authorList>
    </citation>
    <scope>TISSUE SPECIFICITY</scope>
</reference>
<reference key="7">
    <citation type="journal article" date="2007" name="Proc. Natl. Acad. Sci. U.S.A.">
        <title>Nonmammalian orthologs of prestin (SLC26A5) are electrogenic divalent/chloride anion exchangers.</title>
        <authorList>
            <person name="Schaechinger T.J."/>
            <person name="Oliver D."/>
        </authorList>
    </citation>
    <scope>FUNCTION</scope>
</reference>
<reference key="8">
    <citation type="journal article" date="2012" name="J. Physiol. (Lond.)">
        <title>Anion transport by the cochlear motor protein prestin.</title>
        <authorList>
            <person name="Schaenzler M."/>
            <person name="Fahlke C."/>
        </authorList>
    </citation>
    <scope>FUNCTION</scope>
</reference>
<reference key="9">
    <citation type="journal article" date="2012" name="J. Physiol. (Lond.)">
        <title>Mammalian prestin is a weak Cl-/HCO(3)- electrogenic antiporter.</title>
        <authorList>
            <person name="Mistrik P."/>
            <person name="Daudet N."/>
            <person name="Morandell K."/>
            <person name="Ashmore J.F."/>
        </authorList>
    </citation>
    <scope>FUNCTION</scope>
    <scope>TRANSPORTER ACTIVITY</scope>
</reference>
<reference key="10">
    <citation type="journal article" date="2014" name="Nat. Commun.">
        <title>Molecular architecture and the structural basis for anion interaction in prestin and SLC26 transporters.</title>
        <authorList>
            <person name="Gorbunov D."/>
            <person name="Sturlese M."/>
            <person name="Nies F."/>
            <person name="Kluge M."/>
            <person name="Bellanda M."/>
            <person name="Battistutta R."/>
            <person name="Oliver D."/>
        </authorList>
    </citation>
    <scope>FUNCTION</scope>
    <scope>MUTAGENESIS OF LEU-104; VAL-149; ALA-202; ARG-236; LYS-276; PRO-331; LYS-359; GLN-389; SER-398; ARG-399; GLY-408; LEU-431; SER-465 AND ASP-485</scope>
    <scope>SITE</scope>
    <scope>TOPOLOGY</scope>
</reference>
<reference key="11">
    <citation type="journal article" date="2021" name="J. Struct. Biol.">
        <title>Calmodulin binds to the STAS domain of SLC26A5 prestin with a calcium-dependent, one-lobe, binding mode.</title>
        <authorList>
            <person name="Costanzi E."/>
            <person name="Coletti A."/>
            <person name="Zambelli B."/>
            <person name="Macchiarulo A."/>
            <person name="Bellanda M."/>
            <person name="Battistutta R."/>
        </authorList>
    </citation>
    <scope>INTERACTION WITH CALM</scope>
    <scope>DOMAIN</scope>
</reference>
<reference evidence="25" key="12">
    <citation type="journal article" date="2010" name="J. Mol. Biol.">
        <title>Structure of the cytosolic portion of the motor protein prestin and functional role of the STAS domain in SLC26/SulP anion transporters.</title>
        <authorList>
            <person name="Pasqualetto E."/>
            <person name="Aiello R."/>
            <person name="Gesiot L."/>
            <person name="Bonetto G."/>
            <person name="Bellanda M."/>
            <person name="Battistutta R."/>
        </authorList>
    </citation>
    <scope>X-RAY CRYSTALLOGRAPHY (1.57 ANGSTROMS) OF 505-563 AND 637-718</scope>
    <scope>REGION</scope>
</reference>
<reference evidence="26 27 28 29 30" key="13">
    <citation type="journal article" date="2016" name="Biochem. J.">
        <title>The STAS domain of mammalian SLC26A5 prestin harbours an anion-binding site.</title>
        <authorList>
            <person name="Lolli G."/>
            <person name="Pasqualetto E."/>
            <person name="Costanzi E."/>
            <person name="Bonetto G."/>
            <person name="Battistutta R."/>
        </authorList>
    </citation>
    <scope>X-RAY CRYSTALLOGRAPHY (1.81 ANGSTROMS) OF 505-563 AND 637-718 IN COMPLEX WITH CHLORIDE ION; BROMIDE ION; IODIDE ION; NITRATE ION AND THIOCYANATE ION</scope>
    <scope>DOMAIN</scope>
</reference>
<accession>Q9EPH0</accession>
<accession>Q9ERC6</accession>
<protein>
    <recommendedName>
        <fullName evidence="20">Prestin</fullName>
    </recommendedName>
    <alternativeName>
        <fullName>Solute carrier family 26 member 5</fullName>
    </alternativeName>
</protein>
<gene>
    <name evidence="24" type="primary">Slc26a5</name>
    <name type="synonym">Pres</name>
</gene>
<name>S26A5_RAT</name>
<proteinExistence type="evidence at protein level"/>
<keyword id="KW-0002">3D-structure</keyword>
<keyword id="KW-1003">Cell membrane</keyword>
<keyword id="KW-0133">Cell shape</keyword>
<keyword id="KW-0325">Glycoprotein</keyword>
<keyword id="KW-1009">Hearing</keyword>
<keyword id="KW-0472">Membrane</keyword>
<keyword id="KW-0505">Motor protein</keyword>
<keyword id="KW-1185">Reference proteome</keyword>
<keyword id="KW-0812">Transmembrane</keyword>
<keyword id="KW-1133">Transmembrane helix</keyword>
<feature type="chain" id="PRO_0000080170" description="Prestin">
    <location>
        <begin position="1"/>
        <end position="744"/>
    </location>
</feature>
<feature type="topological domain" description="Cytoplasmic" evidence="23">
    <location>
        <begin position="1"/>
        <end position="75"/>
    </location>
</feature>
<feature type="transmembrane region" description="Helical; Name=1" evidence="2">
    <location>
        <begin position="76"/>
        <end position="104"/>
    </location>
</feature>
<feature type="topological domain" description="Extracellular" evidence="23">
    <location>
        <begin position="105"/>
        <end position="108"/>
    </location>
</feature>
<feature type="transmembrane region" description="Helical; Name=2" evidence="2">
    <location>
        <begin position="109"/>
        <end position="126"/>
    </location>
</feature>
<feature type="topological domain" description="Cytoplasmic" evidence="23">
    <location>
        <begin position="127"/>
        <end position="137"/>
    </location>
</feature>
<feature type="transmembrane region" description="Helical; Name=3" evidence="2">
    <location>
        <begin position="138"/>
        <end position="149"/>
    </location>
</feature>
<feature type="topological domain" description="Extracellular" evidence="23">
    <location>
        <begin position="150"/>
        <end position="168"/>
    </location>
</feature>
<feature type="transmembrane region" description="Helical; Name=4" evidence="2">
    <location>
        <begin position="169"/>
        <end position="196"/>
    </location>
</feature>
<feature type="topological domain" description="Cytoplasmic" evidence="23">
    <location>
        <begin position="197"/>
        <end position="206"/>
    </location>
</feature>
<feature type="transmembrane region" description="Helical; Name=5a" evidence="2">
    <location>
        <begin position="207"/>
        <end position="230"/>
    </location>
</feature>
<feature type="topological domain" description="Extracellular" evidence="23">
    <location>
        <begin position="231"/>
        <end position="241"/>
    </location>
</feature>
<feature type="intramembrane region" description="Helical; Name=5b" evidence="2">
    <location>
        <begin position="242"/>
        <end position="253"/>
    </location>
</feature>
<feature type="topological domain" description="Extracellular" evidence="23">
    <location>
        <begin position="254"/>
        <end position="258"/>
    </location>
</feature>
<feature type="transmembrane region" description="Helical; Name=6" evidence="2">
    <location>
        <begin position="259"/>
        <end position="276"/>
    </location>
</feature>
<feature type="topological domain" description="Cytoplasmic" evidence="23">
    <location>
        <begin position="277"/>
        <end position="291"/>
    </location>
</feature>
<feature type="transmembrane region" description="Helical; Name=7" evidence="2">
    <location>
        <begin position="292"/>
        <end position="307"/>
    </location>
</feature>
<feature type="topological domain" description="Extracellular" evidence="23">
    <location>
        <begin position="308"/>
        <end position="332"/>
    </location>
</feature>
<feature type="transmembrane region" description="Helical; Name=8" evidence="2">
    <location>
        <begin position="333"/>
        <end position="359"/>
    </location>
</feature>
<feature type="topological domain" description="Cytoplasmic" evidence="23">
    <location>
        <begin position="360"/>
        <end position="370"/>
    </location>
</feature>
<feature type="transmembrane region" description="Helical; Name=9" evidence="2">
    <location>
        <begin position="371"/>
        <end position="388"/>
    </location>
</feature>
<feature type="topological domain" description="Extracellular" evidence="23">
    <location>
        <begin position="389"/>
        <end position="396"/>
    </location>
</feature>
<feature type="transmembrane region" description="Helical; Name=10" evidence="2">
    <location>
        <begin position="397"/>
        <end position="406"/>
    </location>
</feature>
<feature type="topological domain" description="Cytoplasmic" evidence="23">
    <location>
        <begin position="407"/>
        <end position="410"/>
    </location>
</feature>
<feature type="transmembrane region" description="Helical; Name=11" evidence="2">
    <location>
        <begin position="411"/>
        <end position="431"/>
    </location>
</feature>
<feature type="topological domain" description="Extracellular" evidence="23">
    <location>
        <begin position="432"/>
        <end position="436"/>
    </location>
</feature>
<feature type="transmembrane region" description="Helical; Name=12" evidence="2">
    <location>
        <begin position="437"/>
        <end position="464"/>
    </location>
</feature>
<feature type="topological domain" description="Cytoplasmic" evidence="23">
    <location>
        <position position="465"/>
    </location>
</feature>
<feature type="transmembrane region" description="Helical; Name=13" evidence="2">
    <location>
        <begin position="466"/>
        <end position="481"/>
    </location>
</feature>
<feature type="topological domain" description="Extracellular" evidence="23">
    <location>
        <begin position="482"/>
        <end position="484"/>
    </location>
</feature>
<feature type="transmembrane region" description="Helical; Name=14" evidence="2">
    <location>
        <begin position="485"/>
        <end position="504"/>
    </location>
</feature>
<feature type="topological domain" description="Cytoplasmic" evidence="23">
    <location>
        <begin position="505"/>
        <end position="744"/>
    </location>
</feature>
<feature type="domain" description="STAS" evidence="6">
    <location>
        <begin position="525"/>
        <end position="713"/>
    </location>
</feature>
<feature type="region of interest" description="Extended region for STAS domain" evidence="14 25">
    <location>
        <begin position="505"/>
        <end position="718"/>
    </location>
</feature>
<feature type="region of interest" description="Disordered" evidence="7">
    <location>
        <begin position="720"/>
        <end position="744"/>
    </location>
</feature>
<feature type="short sequence motif" description="Involved in motor function" evidence="4">
    <location>
        <begin position="158"/>
        <end position="168"/>
    </location>
</feature>
<feature type="binding site" evidence="2">
    <location>
        <position position="398"/>
    </location>
    <ligand>
        <name>salicylate</name>
        <dbReference type="ChEBI" id="CHEBI:30762"/>
        <note>antagonist</note>
    </ligand>
</feature>
<feature type="site" description="Controls the electromotile activity" evidence="17">
    <location>
        <position position="398"/>
    </location>
</feature>
<feature type="site" description="Contributes to anion binding" evidence="17">
    <location>
        <position position="399"/>
    </location>
</feature>
<feature type="glycosylation site" description="N-linked (GlcNAc...) asparagine" evidence="5">
    <location>
        <position position="163"/>
    </location>
</feature>
<feature type="glycosylation site" description="N-linked (GlcNAc...) asparagine" evidence="5">
    <location>
        <position position="166"/>
    </location>
</feature>
<feature type="mutagenesis site" description="Is accessible from the extracellular side after extracellular application of thiol-reactive reagents." evidence="17">
    <original>L</original>
    <variation>C</variation>
    <location>
        <position position="104"/>
    </location>
</feature>
<feature type="mutagenesis site" description="Is accessible from the extracellular side after extracellular application of thiol-reactive reagents." evidence="17">
    <original>V</original>
    <variation>C</variation>
    <location>
        <position position="149"/>
    </location>
</feature>
<feature type="mutagenesis site" description="Shifts the voltage-sensitivity to more negative values." evidence="10">
    <original>D</original>
    <variation>N</variation>
    <location>
        <position position="154"/>
    </location>
</feature>
<feature type="mutagenesis site" description="Shifts the voltage-sensitivity to more negative values." evidence="10">
    <original>D</original>
    <variation>N</variation>
    <location>
        <position position="155"/>
    </location>
</feature>
<feature type="mutagenesis site" description="No effect." evidence="10">
    <original>E</original>
    <variation>Q</variation>
    <location>
        <position position="169"/>
    </location>
</feature>
<feature type="mutagenesis site" description="No effect." evidence="10">
    <original>K</original>
    <variation>Q</variation>
    <location>
        <position position="177"/>
    </location>
</feature>
<feature type="mutagenesis site" description="Shifts the voltage-sensitivity to more negative values." evidence="10">
    <original>R</original>
    <variation>Q</variation>
    <location>
        <position position="197"/>
    </location>
</feature>
<feature type="mutagenesis site" description="Is only accessible to the intracellular side application of thiol-reactive reagents. Is not affected by thiol-reactive reagents extracellular side application." evidence="17">
    <original>A</original>
    <variation>C</variation>
    <location>
        <position position="202"/>
    </location>
</feature>
<feature type="mutagenesis site" description="Shifts the voltage-sensitivity to more negative values; when associated with Q-235 and Q-236." evidence="10">
    <original>K</original>
    <variation>Q</variation>
    <location>
        <position position="233"/>
    </location>
</feature>
<feature type="mutagenesis site" description="Shifts the voltage-sensitivity to more negative values; when associated with Q-233 and Q-236." evidence="10">
    <original>K</original>
    <variation>Q</variation>
    <location>
        <position position="235"/>
    </location>
</feature>
<feature type="mutagenesis site" description="Is accessible from the extracellular side after extracellular application of thiol-reactive reagents." evidence="17">
    <original>R</original>
    <variation>C</variation>
    <location>
        <position position="236"/>
    </location>
</feature>
<feature type="mutagenesis site" description="Shifts the voltage-sensitivity to more negative values; when associated with Q-233 and Q-235." evidence="10">
    <original>R</original>
    <variation>Q</variation>
    <location>
        <position position="236"/>
    </location>
</feature>
<feature type="mutagenesis site" description="Is only accessible to the intracellular side application of thiol-reactive reagents. Is not affected by thiol-reactive reagents extracellular side application." evidence="17">
    <original>K</original>
    <variation>C</variation>
    <location>
        <position position="276"/>
    </location>
</feature>
<feature type="mutagenesis site" description="Shifts the voltage-sensitivity to slightly more positive values." evidence="10">
    <original>E</original>
    <variation>Q</variation>
    <location>
        <position position="277"/>
    </location>
</feature>
<feature type="mutagenesis site" description="No effect; when associated with Q-283 and Q-285." evidence="10">
    <original>R</original>
    <variation>Q</variation>
    <location>
        <position position="281"/>
    </location>
</feature>
<feature type="mutagenesis site" description="No effect; when associated with Q-218 and Q-285." evidence="10">
    <original>K</original>
    <variation>Q</variation>
    <location>
        <position position="283"/>
    </location>
</feature>
<feature type="mutagenesis site" description="No effect; when associated with Q-281 and Q-283." evidence="10">
    <original>K</original>
    <variation>Q</variation>
    <location>
        <position position="285"/>
    </location>
</feature>
<feature type="mutagenesis site" description="Is accessible from the extracellular side after extracellular application of thiol-reactive reagents." evidence="17">
    <original>P</original>
    <variation>C</variation>
    <location>
        <position position="331"/>
    </location>
</feature>
<feature type="mutagenesis site" description="No effect." evidence="10">
    <original>D</original>
    <variation>Q</variation>
    <location>
        <position position="332"/>
    </location>
</feature>
<feature type="mutagenesis site" description="Shifts the voltage-sensitivity to more positive values." evidence="10">
    <original>D</original>
    <variation>Q</variation>
    <location>
        <position position="342"/>
    </location>
</feature>
<feature type="mutagenesis site" description="Is only accessible to the intracellular side application of thiol-reactive reagents. Is not affected by thiol-reactive reagents extracellular side application." evidence="17">
    <original>K</original>
    <variation>C</variation>
    <location>
        <position position="359"/>
    </location>
</feature>
<feature type="mutagenesis site" description="Is accessible from the extracellular side after extracellular application of thiol-reactive reagents." evidence="17">
    <original>Q</original>
    <variation>C</variation>
    <location>
        <position position="389"/>
    </location>
</feature>
<feature type="mutagenesis site" description="Does not affect anion-dependent electromotility-related charge movement. Strongly attenuates inhibition by oxalate of electromotility-related charge movement. Is sensible to intracellular thiol-reactive reagents. Is completely insensitive to both reagents applied to the extracellular face of the membrane. Strongly affects the interaction with oxalate." evidence="17">
    <original>S</original>
    <variation>C</variation>
    <location>
        <position position="398"/>
    </location>
</feature>
<feature type="mutagenesis site" description="Largely abolishes anion-dependent electromotility-related charge movement." evidence="17">
    <original>R</original>
    <variation>C</variation>
    <location>
        <position position="399"/>
    </location>
</feature>
<feature type="mutagenesis site" description="Fully abolishes anion-dependent electromotility-related charge movement." evidence="17">
    <original>R</original>
    <variation>E</variation>
    <location>
        <position position="399"/>
    </location>
</feature>
<feature type="mutagenesis site" description="Does not affect anion-dependent electromotility-related charge movement." evidence="17">
    <original>R</original>
    <variation>K</variation>
    <location>
        <position position="399"/>
    </location>
</feature>
<feature type="mutagenesis site" description="Fully abolishes anion-dependent electromotility-related charge movement." evidence="17">
    <original>R</original>
    <variation>Q</variation>
    <location>
        <position position="399"/>
    </location>
</feature>
<feature type="mutagenesis site" description="Does not affect anion-dependent electromotility-related charge movement. Abrogates salicylate inhibition of electromotility-related charge movement." evidence="17">
    <original>R</original>
    <variation>S</variation>
    <location>
        <position position="399"/>
    </location>
</feature>
<feature type="mutagenesis site" description="Is only accessible to the intracellular side application of thiol-reactive reagents. Is not affected by thiol-reactive reagents extracellular side application." evidence="17">
    <original>G</original>
    <variation>C</variation>
    <location>
        <position position="408"/>
    </location>
</feature>
<feature type="mutagenesis site" description="No effect." evidence="10">
    <original>K</original>
    <variation>Q</variation>
    <location>
        <position position="409"/>
    </location>
</feature>
<feature type="mutagenesis site" description="Is accessible from the extracellular side after extracellular application of thiol-reactive reagents." evidence="17">
    <original>L</original>
    <variation>C</variation>
    <location>
        <position position="431"/>
    </location>
</feature>
<feature type="mutagenesis site" description="Is only accessible to the intracellular side application of thiol-reactive reagents. Is not affected by thiol-reactive reagents extracellular side application." evidence="17">
    <original>S</original>
    <variation>C</variation>
    <location>
        <position position="465"/>
    </location>
</feature>
<feature type="mutagenesis site" description="Is accessible from the extracellular side after extracellular application of thiol-reactive reagents." evidence="17">
    <original>D</original>
    <variation>C</variation>
    <location>
        <position position="485"/>
    </location>
</feature>
<feature type="mutagenesis site" description="No effect; when associated with Q-558 and Q-559." evidence="10">
    <original>K</original>
    <variation>Q</variation>
    <location>
        <position position="557"/>
    </location>
</feature>
<feature type="mutagenesis site" description="No effect; when associated with Q-557 and Q-559." evidence="10">
    <original>R</original>
    <variation>Q</variation>
    <location>
        <position position="558"/>
    </location>
</feature>
<feature type="mutagenesis site" description="No effect; when associated with Q-557 and Q-558." evidence="10">
    <original>K</original>
    <variation>Q</variation>
    <location>
        <position position="559"/>
    </location>
</feature>
<feature type="mutagenesis site" description="Shifts the voltage-sensitivity to slightly more positive values; when associated with Q-572 and Q-577." evidence="10">
    <original>R</original>
    <variation>Q</variation>
    <location>
        <position position="571"/>
    </location>
</feature>
<feature type="mutagenesis site" description="Shifts the voltage-sensitivity to slightly more positive values; when associated with Q-571 and Q-577." evidence="10">
    <original>R</original>
    <variation>Q</variation>
    <location>
        <position position="572"/>
    </location>
</feature>
<feature type="mutagenesis site" description="Shifts the voltage-sensitivity to slightly more positive values; when associated with Q-571 and Q-572." evidence="10">
    <original>K</original>
    <variation>Q</variation>
    <location>
        <position position="577"/>
    </location>
</feature>
<feature type="sequence conflict" description="In Ref. 2; AAG30297." evidence="21" ref="2">
    <original>L</original>
    <variation>V</variation>
    <location>
        <position position="251"/>
    </location>
</feature>
<feature type="sequence conflict" description="In Ref. 2; AAG30297." evidence="21" ref="2">
    <original>I</original>
    <variation>M</variation>
    <location>
        <position position="567"/>
    </location>
</feature>
<feature type="sequence conflict" description="In Ref. 2; AAG30297." evidence="21" ref="2">
    <original>R</original>
    <variation>S</variation>
    <location>
        <position position="572"/>
    </location>
</feature>
<feature type="sequence conflict" description="In Ref. 2; AAG30297." evidence="21" ref="2">
    <original>D</original>
    <variation>G</variation>
    <location>
        <position position="612"/>
    </location>
</feature>
<feature type="sequence conflict" description="In Ref. 2; AAG30297." evidence="21" ref="2">
    <original>GI</original>
    <variation>VM</variation>
    <location>
        <begin position="662"/>
        <end position="663"/>
    </location>
</feature>
<feature type="strand" evidence="31">
    <location>
        <begin position="507"/>
        <end position="513"/>
    </location>
</feature>
<feature type="strand" evidence="31">
    <location>
        <begin position="520"/>
        <end position="522"/>
    </location>
</feature>
<feature type="turn" evidence="31">
    <location>
        <begin position="523"/>
        <end position="525"/>
    </location>
</feature>
<feature type="strand" evidence="31">
    <location>
        <begin position="535"/>
        <end position="540"/>
    </location>
</feature>
<feature type="helix" evidence="31">
    <location>
        <begin position="544"/>
        <end position="554"/>
    </location>
</feature>
<feature type="strand" evidence="31">
    <location>
        <begin position="640"/>
        <end position="645"/>
    </location>
</feature>
<feature type="helix" evidence="31">
    <location>
        <begin position="654"/>
        <end position="668"/>
    </location>
</feature>
<feature type="turn" evidence="31">
    <location>
        <begin position="669"/>
        <end position="671"/>
    </location>
</feature>
<feature type="strand" evidence="31">
    <location>
        <begin position="673"/>
        <end position="678"/>
    </location>
</feature>
<feature type="helix" evidence="31">
    <location>
        <begin position="681"/>
        <end position="689"/>
    </location>
</feature>
<feature type="turn" evidence="31">
    <location>
        <begin position="690"/>
        <end position="693"/>
    </location>
</feature>
<feature type="helix" evidence="31">
    <location>
        <begin position="696"/>
        <end position="701"/>
    </location>
</feature>
<feature type="strand" evidence="31">
    <location>
        <begin position="702"/>
        <end position="705"/>
    </location>
</feature>
<feature type="helix" evidence="31">
    <location>
        <begin position="706"/>
        <end position="712"/>
    </location>
</feature>
<sequence length="744" mass="81279">MDHAEENEIPAETQKYLVERPIFSHPVLQERLHVKDKVTDSIGDKLKQAFTCTPKKVRNIIYMFLPITKWLPAYKFKEYVLGDLVSGISTGVLQLPQGLAFAMLAAVPPVFGLYSSFYPVIMYCFFGTSRHISIGPFAVISLMIGGVAVRLVPDDIVIPGGVNATNGTEARDALRVKVAMSVTLLSGIIQFCLGVCRFGFVAIYLTEPLVRGFTTAAAVHVFTSMLKYLFGVKTKRYSGIFSVVYSTVAVLQNVKNLNVCSLGVGLMVFGLLLGGKEFNERFKEKLPAPIPLEFFAVVMGTGISAGFNLHESYSVDVVGTLPLGLLPPANPDTSLFHLVYVDAIAIAIVGFSVTISMAKTLANKHGYQVDGNQELIALGICNSIGSLFQTFSISCSLSRSLVQEGTGGKTQLAGCLASLMILLVILATGFLFESLPQAVLSAIVIVNLKGMFMQFSDLPFFWRTSKIELTIWLTTFVSSLFLGLDYGLITAVIIALLTVIYRTQSPSYTVLGQLPDTDVYIDIDAYEEVKEIPGIKIFQINAPIYYANSDLYSSALKRKTGVNPAIIMGARRKAMRKYAKEVGNANIANATVVKVDAEVDGENATKPEEEDDEVKFPPIVIKTTFPEELQRFLPQGENIHTVILDFTQVNFMDSVGVKTLAGIVKEYGDVGIYVYLAGCSAQVVNDLTSNRFFENPALKELLFHSIHDAVLGSQVREAMAEQETTVLPPQEDMEPNATPTTPEA</sequence>
<organism>
    <name type="scientific">Rattus norvegicus</name>
    <name type="common">Rat</name>
    <dbReference type="NCBI Taxonomy" id="10116"/>
    <lineage>
        <taxon>Eukaryota</taxon>
        <taxon>Metazoa</taxon>
        <taxon>Chordata</taxon>
        <taxon>Craniata</taxon>
        <taxon>Vertebrata</taxon>
        <taxon>Euteleostomi</taxon>
        <taxon>Mammalia</taxon>
        <taxon>Eutheria</taxon>
        <taxon>Euarchontoglires</taxon>
        <taxon>Glires</taxon>
        <taxon>Rodentia</taxon>
        <taxon>Myomorpha</taxon>
        <taxon>Muroidea</taxon>
        <taxon>Muridae</taxon>
        <taxon>Murinae</taxon>
        <taxon>Rattus</taxon>
    </lineage>
</organism>
<evidence type="ECO:0000250" key="1">
    <source>
        <dbReference type="UniProtKB" id="D7PC76"/>
    </source>
</evidence>
<evidence type="ECO:0000250" key="2">
    <source>
        <dbReference type="UniProtKB" id="P58743"/>
    </source>
</evidence>
<evidence type="ECO:0000250" key="3">
    <source>
        <dbReference type="UniProtKB" id="Q99NH7"/>
    </source>
</evidence>
<evidence type="ECO:0000250" key="4">
    <source>
        <dbReference type="UniProtKB" id="Q9JKQ2"/>
    </source>
</evidence>
<evidence type="ECO:0000255" key="5"/>
<evidence type="ECO:0000255" key="6">
    <source>
        <dbReference type="PROSITE-ProRule" id="PRU00198"/>
    </source>
</evidence>
<evidence type="ECO:0000256" key="7">
    <source>
        <dbReference type="SAM" id="MobiDB-lite"/>
    </source>
</evidence>
<evidence type="ECO:0000269" key="8">
    <source>
    </source>
</evidence>
<evidence type="ECO:0000269" key="9">
    <source>
    </source>
</evidence>
<evidence type="ECO:0000269" key="10">
    <source>
    </source>
</evidence>
<evidence type="ECO:0000269" key="11">
    <source>
    </source>
</evidence>
<evidence type="ECO:0000269" key="12">
    <source>
    </source>
</evidence>
<evidence type="ECO:0000269" key="13">
    <source>
    </source>
</evidence>
<evidence type="ECO:0000269" key="14">
    <source>
    </source>
</evidence>
<evidence type="ECO:0000269" key="15">
    <source>
    </source>
</evidence>
<evidence type="ECO:0000269" key="16">
    <source>
    </source>
</evidence>
<evidence type="ECO:0000269" key="17">
    <source>
    </source>
</evidence>
<evidence type="ECO:0000269" key="18">
    <source>
    </source>
</evidence>
<evidence type="ECO:0000269" key="19">
    <source>
    </source>
</evidence>
<evidence type="ECO:0000303" key="20">
    <source>
    </source>
</evidence>
<evidence type="ECO:0000305" key="21"/>
<evidence type="ECO:0000305" key="22">
    <source>
    </source>
</evidence>
<evidence type="ECO:0000305" key="23">
    <source>
    </source>
</evidence>
<evidence type="ECO:0000312" key="24">
    <source>
        <dbReference type="RGD" id="69334"/>
    </source>
</evidence>
<evidence type="ECO:0007744" key="25">
    <source>
        <dbReference type="PDB" id="3LLO"/>
    </source>
</evidence>
<evidence type="ECO:0007744" key="26">
    <source>
        <dbReference type="PDB" id="5EUS"/>
    </source>
</evidence>
<evidence type="ECO:0007744" key="27">
    <source>
        <dbReference type="PDB" id="5EUU"/>
    </source>
</evidence>
<evidence type="ECO:0007744" key="28">
    <source>
        <dbReference type="PDB" id="5EUW"/>
    </source>
</evidence>
<evidence type="ECO:0007744" key="29">
    <source>
        <dbReference type="PDB" id="5EUX"/>
    </source>
</evidence>
<evidence type="ECO:0007744" key="30">
    <source>
        <dbReference type="PDB" id="5EUZ"/>
    </source>
</evidence>
<evidence type="ECO:0007829" key="31">
    <source>
        <dbReference type="PDB" id="3LLO"/>
    </source>
</evidence>